<evidence type="ECO:0000250" key="1"/>
<evidence type="ECO:0000255" key="2"/>
<evidence type="ECO:0000305" key="3"/>
<dbReference type="EMBL" id="CR380957">
    <property type="protein sequence ID" value="CAG61213.1"/>
    <property type="molecule type" value="Genomic_DNA"/>
</dbReference>
<dbReference type="RefSeq" id="XP_448252.1">
    <property type="nucleotide sequence ID" value="XM_448252.1"/>
</dbReference>
<dbReference type="SMR" id="Q6FNE2"/>
<dbReference type="FunCoup" id="Q6FNE2">
    <property type="interactions" value="42"/>
</dbReference>
<dbReference type="STRING" id="284593.Q6FNE2"/>
<dbReference type="GlyCosmos" id="Q6FNE2">
    <property type="glycosylation" value="4 sites, No reported glycans"/>
</dbReference>
<dbReference type="EnsemblFungi" id="CAGL0K00649g-T">
    <property type="protein sequence ID" value="CAGL0K00649g-T-p1"/>
    <property type="gene ID" value="CAGL0K00649g"/>
</dbReference>
<dbReference type="KEGG" id="cgr:2890228"/>
<dbReference type="CGD" id="CAL0134137">
    <property type="gene designation" value="CAGL0K00649g"/>
</dbReference>
<dbReference type="VEuPathDB" id="FungiDB:B1J91_K00649g"/>
<dbReference type="VEuPathDB" id="FungiDB:CAGL0K00649g"/>
<dbReference type="eggNOG" id="ENOG502RXGD">
    <property type="taxonomic scope" value="Eukaryota"/>
</dbReference>
<dbReference type="HOGENOM" id="CLU_102669_0_0_1"/>
<dbReference type="InParanoid" id="Q6FNE2"/>
<dbReference type="OMA" id="PYITVEL"/>
<dbReference type="Proteomes" id="UP000002428">
    <property type="component" value="Chromosome K"/>
</dbReference>
<dbReference type="GO" id="GO:0005789">
    <property type="term" value="C:endoplasmic reticulum membrane"/>
    <property type="evidence" value="ECO:0007669"/>
    <property type="project" value="UniProtKB-SubCell"/>
</dbReference>
<dbReference type="GO" id="GO:0006888">
    <property type="term" value="P:endoplasmic reticulum to Golgi vesicle-mediated transport"/>
    <property type="evidence" value="ECO:0007669"/>
    <property type="project" value="EnsemblFungi"/>
</dbReference>
<dbReference type="GO" id="GO:0015031">
    <property type="term" value="P:protein transport"/>
    <property type="evidence" value="ECO:0007669"/>
    <property type="project" value="UniProtKB-KW"/>
</dbReference>
<dbReference type="InterPro" id="IPR031395">
    <property type="entry name" value="Sop4"/>
</dbReference>
<dbReference type="Pfam" id="PF17081">
    <property type="entry name" value="SOP4"/>
    <property type="match status" value="1"/>
</dbReference>
<comment type="function">
    <text evidence="1">Involved in the export of PMA1, possibly through the monitoring or assisting of PMA1 folding and acquisition of competence to enter vesicles.</text>
</comment>
<comment type="subcellular location">
    <subcellularLocation>
        <location evidence="1">Endoplasmic reticulum membrane</location>
        <topology evidence="1">Single-pass type I membrane protein</topology>
    </subcellularLocation>
</comment>
<comment type="similarity">
    <text evidence="3">Belongs to the SOP4 family.</text>
</comment>
<protein>
    <recommendedName>
        <fullName>Protein SOP4</fullName>
    </recommendedName>
</protein>
<organism>
    <name type="scientific">Candida glabrata (strain ATCC 2001 / BCRC 20586 / JCM 3761 / NBRC 0622 / NRRL Y-65 / CBS 138)</name>
    <name type="common">Yeast</name>
    <name type="synonym">Nakaseomyces glabratus</name>
    <dbReference type="NCBI Taxonomy" id="284593"/>
    <lineage>
        <taxon>Eukaryota</taxon>
        <taxon>Fungi</taxon>
        <taxon>Dikarya</taxon>
        <taxon>Ascomycota</taxon>
        <taxon>Saccharomycotina</taxon>
        <taxon>Saccharomycetes</taxon>
        <taxon>Saccharomycetales</taxon>
        <taxon>Saccharomycetaceae</taxon>
        <taxon>Nakaseomyces</taxon>
    </lineage>
</organism>
<sequence>MWKSVIYLFVLLLGVIRAEDVKDLRNNEVSIKGRLELSEIDISAYMIPRCSFRLYQIGNYSADKPFHQITRIKDKNGTFEFNHVPINHGVNESTYFVMTPSSRDFNLLPQRVLVEVTNIFNETTGKVEQQLKAFRNYFGREYFPSKDIHFPDKLEEMDALPYISIKMSKMLPFRDYLQQRNVGLLQSGPLAGILNSKWKIAAVITLLALMTFPYLVEKLDPETARAMKEEARKKQREKYVVKEE</sequence>
<proteinExistence type="inferred from homology"/>
<accession>Q6FNE2</accession>
<feature type="signal peptide" evidence="2">
    <location>
        <begin position="1"/>
        <end position="18"/>
    </location>
</feature>
<feature type="chain" id="PRO_0000324496" description="Protein SOP4">
    <location>
        <begin position="19"/>
        <end position="244"/>
    </location>
</feature>
<feature type="topological domain" description="Lumenal" evidence="2">
    <location>
        <begin position="19"/>
        <end position="199"/>
    </location>
</feature>
<feature type="transmembrane region" description="Helical" evidence="2">
    <location>
        <begin position="200"/>
        <end position="216"/>
    </location>
</feature>
<feature type="topological domain" description="Cytoplasmic" evidence="2">
    <location>
        <begin position="217"/>
        <end position="244"/>
    </location>
</feature>
<feature type="glycosylation site" description="N-linked (GlcNAc...) asparagine" evidence="2">
    <location>
        <position position="59"/>
    </location>
</feature>
<feature type="glycosylation site" description="N-linked (GlcNAc...) asparagine" evidence="2">
    <location>
        <position position="76"/>
    </location>
</feature>
<feature type="glycosylation site" description="N-linked (GlcNAc...) asparagine" evidence="2">
    <location>
        <position position="91"/>
    </location>
</feature>
<feature type="glycosylation site" description="N-linked (GlcNAc...) asparagine" evidence="2">
    <location>
        <position position="121"/>
    </location>
</feature>
<keyword id="KW-0256">Endoplasmic reticulum</keyword>
<keyword id="KW-0325">Glycoprotein</keyword>
<keyword id="KW-0472">Membrane</keyword>
<keyword id="KW-0653">Protein transport</keyword>
<keyword id="KW-1185">Reference proteome</keyword>
<keyword id="KW-0732">Signal</keyword>
<keyword id="KW-0812">Transmembrane</keyword>
<keyword id="KW-1133">Transmembrane helix</keyword>
<keyword id="KW-0813">Transport</keyword>
<gene>
    <name type="primary">SOP4</name>
    <name type="ordered locus">CAGL0K00649g</name>
</gene>
<name>SOP4_CANGA</name>
<reference key="1">
    <citation type="journal article" date="2004" name="Nature">
        <title>Genome evolution in yeasts.</title>
        <authorList>
            <person name="Dujon B."/>
            <person name="Sherman D."/>
            <person name="Fischer G."/>
            <person name="Durrens P."/>
            <person name="Casaregola S."/>
            <person name="Lafontaine I."/>
            <person name="de Montigny J."/>
            <person name="Marck C."/>
            <person name="Neuveglise C."/>
            <person name="Talla E."/>
            <person name="Goffard N."/>
            <person name="Frangeul L."/>
            <person name="Aigle M."/>
            <person name="Anthouard V."/>
            <person name="Babour A."/>
            <person name="Barbe V."/>
            <person name="Barnay S."/>
            <person name="Blanchin S."/>
            <person name="Beckerich J.-M."/>
            <person name="Beyne E."/>
            <person name="Bleykasten C."/>
            <person name="Boisrame A."/>
            <person name="Boyer J."/>
            <person name="Cattolico L."/>
            <person name="Confanioleri F."/>
            <person name="de Daruvar A."/>
            <person name="Despons L."/>
            <person name="Fabre E."/>
            <person name="Fairhead C."/>
            <person name="Ferry-Dumazet H."/>
            <person name="Groppi A."/>
            <person name="Hantraye F."/>
            <person name="Hennequin C."/>
            <person name="Jauniaux N."/>
            <person name="Joyet P."/>
            <person name="Kachouri R."/>
            <person name="Kerrest A."/>
            <person name="Koszul R."/>
            <person name="Lemaire M."/>
            <person name="Lesur I."/>
            <person name="Ma L."/>
            <person name="Muller H."/>
            <person name="Nicaud J.-M."/>
            <person name="Nikolski M."/>
            <person name="Oztas S."/>
            <person name="Ozier-Kalogeropoulos O."/>
            <person name="Pellenz S."/>
            <person name="Potier S."/>
            <person name="Richard G.-F."/>
            <person name="Straub M.-L."/>
            <person name="Suleau A."/>
            <person name="Swennen D."/>
            <person name="Tekaia F."/>
            <person name="Wesolowski-Louvel M."/>
            <person name="Westhof E."/>
            <person name="Wirth B."/>
            <person name="Zeniou-Meyer M."/>
            <person name="Zivanovic Y."/>
            <person name="Bolotin-Fukuhara M."/>
            <person name="Thierry A."/>
            <person name="Bouchier C."/>
            <person name="Caudron B."/>
            <person name="Scarpelli C."/>
            <person name="Gaillardin C."/>
            <person name="Weissenbach J."/>
            <person name="Wincker P."/>
            <person name="Souciet J.-L."/>
        </authorList>
    </citation>
    <scope>NUCLEOTIDE SEQUENCE [LARGE SCALE GENOMIC DNA]</scope>
    <source>
        <strain>ATCC 2001 / BCRC 20586 / JCM 3761 / NBRC 0622 / NRRL Y-65 / CBS 138</strain>
    </source>
</reference>